<protein>
    <recommendedName>
        <fullName evidence="1">Translation initiation factor IF-1</fullName>
    </recommendedName>
</protein>
<name>IF1_PETMO</name>
<organism>
    <name type="scientific">Petrotoga mobilis (strain DSM 10674 / SJ95)</name>
    <dbReference type="NCBI Taxonomy" id="403833"/>
    <lineage>
        <taxon>Bacteria</taxon>
        <taxon>Thermotogati</taxon>
        <taxon>Thermotogota</taxon>
        <taxon>Thermotogae</taxon>
        <taxon>Petrotogales</taxon>
        <taxon>Petrotogaceae</taxon>
        <taxon>Petrotoga</taxon>
    </lineage>
</organism>
<accession>A9BFZ5</accession>
<reference key="1">
    <citation type="submission" date="2007-11" db="EMBL/GenBank/DDBJ databases">
        <title>Complete sequence of Petroga mobilis SJ95.</title>
        <authorList>
            <consortium name="US DOE Joint Genome Institute"/>
            <person name="Copeland A."/>
            <person name="Lucas S."/>
            <person name="Lapidus A."/>
            <person name="Barry K."/>
            <person name="Glavina del Rio T."/>
            <person name="Dalin E."/>
            <person name="Tice H."/>
            <person name="Pitluck S."/>
            <person name="Meincke L."/>
            <person name="Brettin T."/>
            <person name="Bruce D."/>
            <person name="Detter J.C."/>
            <person name="Han C."/>
            <person name="Kuske C.R."/>
            <person name="Schmutz J."/>
            <person name="Larimer F."/>
            <person name="Land M."/>
            <person name="Hauser L."/>
            <person name="Kyrpides N."/>
            <person name="Mikhailova N."/>
            <person name="Noll K."/>
            <person name="Richardson P."/>
        </authorList>
    </citation>
    <scope>NUCLEOTIDE SEQUENCE [LARGE SCALE GENOMIC DNA]</scope>
    <source>
        <strain>DSM 10674 / SJ95</strain>
    </source>
</reference>
<proteinExistence type="inferred from homology"/>
<sequence length="76" mass="8662">MAKKDVVVMQGYIIEALPNANFKVKLDNGHEILAHISGRMRKNFIKILPGDRVTVEVSVYDLNKGRIVKREKVNKD</sequence>
<feature type="chain" id="PRO_0000338882" description="Translation initiation factor IF-1">
    <location>
        <begin position="1"/>
        <end position="76"/>
    </location>
</feature>
<feature type="domain" description="S1-like" evidence="1">
    <location>
        <begin position="1"/>
        <end position="72"/>
    </location>
</feature>
<keyword id="KW-0963">Cytoplasm</keyword>
<keyword id="KW-0396">Initiation factor</keyword>
<keyword id="KW-0648">Protein biosynthesis</keyword>
<keyword id="KW-0694">RNA-binding</keyword>
<keyword id="KW-0699">rRNA-binding</keyword>
<gene>
    <name evidence="1" type="primary">infA</name>
    <name type="ordered locus">Pmob_0767</name>
</gene>
<comment type="function">
    <text evidence="1">One of the essential components for the initiation of protein synthesis. Stabilizes the binding of IF-2 and IF-3 on the 30S subunit to which N-formylmethionyl-tRNA(fMet) subsequently binds. Helps modulate mRNA selection, yielding the 30S pre-initiation complex (PIC). Upon addition of the 50S ribosomal subunit IF-1, IF-2 and IF-3 are released leaving the mature 70S translation initiation complex.</text>
</comment>
<comment type="subunit">
    <text evidence="1">Component of the 30S ribosomal translation pre-initiation complex which assembles on the 30S ribosome in the order IF-2 and IF-3, IF-1 and N-formylmethionyl-tRNA(fMet); mRNA recruitment can occur at any time during PIC assembly.</text>
</comment>
<comment type="subcellular location">
    <subcellularLocation>
        <location evidence="1">Cytoplasm</location>
    </subcellularLocation>
</comment>
<comment type="similarity">
    <text evidence="1">Belongs to the IF-1 family.</text>
</comment>
<comment type="sequence caution" evidence="2">
    <conflict type="erroneous initiation">
        <sequence resource="EMBL-CDS" id="ABX31491"/>
    </conflict>
    <text>Extended N-terminus.</text>
</comment>
<dbReference type="EMBL" id="CP000879">
    <property type="protein sequence ID" value="ABX31491.1"/>
    <property type="status" value="ALT_INIT"/>
    <property type="molecule type" value="Genomic_DNA"/>
</dbReference>
<dbReference type="RefSeq" id="WP_041534284.1">
    <property type="nucleotide sequence ID" value="NC_010003.1"/>
</dbReference>
<dbReference type="SMR" id="A9BFZ5"/>
<dbReference type="STRING" id="403833.Pmob_0767"/>
<dbReference type="KEGG" id="pmo:Pmob_0767"/>
<dbReference type="eggNOG" id="COG0361">
    <property type="taxonomic scope" value="Bacteria"/>
</dbReference>
<dbReference type="HOGENOM" id="CLU_151267_0_1_0"/>
<dbReference type="OrthoDB" id="9803250at2"/>
<dbReference type="Proteomes" id="UP000000789">
    <property type="component" value="Chromosome"/>
</dbReference>
<dbReference type="GO" id="GO:0005829">
    <property type="term" value="C:cytosol"/>
    <property type="evidence" value="ECO:0007669"/>
    <property type="project" value="TreeGrafter"/>
</dbReference>
<dbReference type="GO" id="GO:0043022">
    <property type="term" value="F:ribosome binding"/>
    <property type="evidence" value="ECO:0007669"/>
    <property type="project" value="UniProtKB-UniRule"/>
</dbReference>
<dbReference type="GO" id="GO:0019843">
    <property type="term" value="F:rRNA binding"/>
    <property type="evidence" value="ECO:0007669"/>
    <property type="project" value="UniProtKB-UniRule"/>
</dbReference>
<dbReference type="GO" id="GO:0003743">
    <property type="term" value="F:translation initiation factor activity"/>
    <property type="evidence" value="ECO:0007669"/>
    <property type="project" value="UniProtKB-UniRule"/>
</dbReference>
<dbReference type="CDD" id="cd04451">
    <property type="entry name" value="S1_IF1"/>
    <property type="match status" value="1"/>
</dbReference>
<dbReference type="FunFam" id="2.40.50.140:FF:000002">
    <property type="entry name" value="Translation initiation factor IF-1"/>
    <property type="match status" value="1"/>
</dbReference>
<dbReference type="Gene3D" id="2.40.50.140">
    <property type="entry name" value="Nucleic acid-binding proteins"/>
    <property type="match status" value="1"/>
</dbReference>
<dbReference type="HAMAP" id="MF_00075">
    <property type="entry name" value="IF_1"/>
    <property type="match status" value="1"/>
</dbReference>
<dbReference type="InterPro" id="IPR012340">
    <property type="entry name" value="NA-bd_OB-fold"/>
</dbReference>
<dbReference type="InterPro" id="IPR006196">
    <property type="entry name" value="RNA-binding_domain_S1_IF1"/>
</dbReference>
<dbReference type="InterPro" id="IPR003029">
    <property type="entry name" value="S1_domain"/>
</dbReference>
<dbReference type="InterPro" id="IPR004368">
    <property type="entry name" value="TIF_IF1"/>
</dbReference>
<dbReference type="NCBIfam" id="TIGR00008">
    <property type="entry name" value="infA"/>
    <property type="match status" value="1"/>
</dbReference>
<dbReference type="PANTHER" id="PTHR33370">
    <property type="entry name" value="TRANSLATION INITIATION FACTOR IF-1, CHLOROPLASTIC"/>
    <property type="match status" value="1"/>
</dbReference>
<dbReference type="PANTHER" id="PTHR33370:SF1">
    <property type="entry name" value="TRANSLATION INITIATION FACTOR IF-1, CHLOROPLASTIC"/>
    <property type="match status" value="1"/>
</dbReference>
<dbReference type="Pfam" id="PF01176">
    <property type="entry name" value="eIF-1a"/>
    <property type="match status" value="1"/>
</dbReference>
<dbReference type="SMART" id="SM00316">
    <property type="entry name" value="S1"/>
    <property type="match status" value="1"/>
</dbReference>
<dbReference type="SUPFAM" id="SSF50249">
    <property type="entry name" value="Nucleic acid-binding proteins"/>
    <property type="match status" value="1"/>
</dbReference>
<dbReference type="PROSITE" id="PS50832">
    <property type="entry name" value="S1_IF1_TYPE"/>
    <property type="match status" value="1"/>
</dbReference>
<evidence type="ECO:0000255" key="1">
    <source>
        <dbReference type="HAMAP-Rule" id="MF_00075"/>
    </source>
</evidence>
<evidence type="ECO:0000305" key="2"/>